<protein>
    <recommendedName>
        <fullName evidence="1 13">Flavin-dependent monooxygenase</fullName>
    </recommendedName>
    <alternativeName>
        <fullName evidence="1 14">TetX monooxygenase</fullName>
        <shortName evidence="1">TetX</shortName>
        <ecNumber evidence="1 3">1.14.13.231</ecNumber>
    </alternativeName>
    <alternativeName>
        <fullName evidence="15">TetX2</fullName>
    </alternativeName>
</protein>
<dbReference type="EC" id="1.14.13.231" evidence="1 3"/>
<dbReference type="EMBL" id="AJ311171">
    <property type="protein sequence ID" value="CAC47932.1"/>
    <property type="molecule type" value="Genomic_DNA"/>
</dbReference>
<dbReference type="PDB" id="2XDO">
    <property type="method" value="X-ray"/>
    <property type="resolution" value="2.09 A"/>
    <property type="chains" value="A/B/C/D=11-388"/>
</dbReference>
<dbReference type="PDB" id="2XYO">
    <property type="method" value="X-ray"/>
    <property type="resolution" value="3.00 A"/>
    <property type="chains" value="A/B/C/D=11-388"/>
</dbReference>
<dbReference type="PDB" id="2Y6Q">
    <property type="method" value="X-ray"/>
    <property type="resolution" value="2.37 A"/>
    <property type="chains" value="A/B/C/D=11-388"/>
</dbReference>
<dbReference type="PDB" id="2Y6R">
    <property type="method" value="X-ray"/>
    <property type="resolution" value="3.10 A"/>
    <property type="chains" value="A/B/C/D=11-388"/>
</dbReference>
<dbReference type="PDB" id="3P9U">
    <property type="method" value="X-ray"/>
    <property type="resolution" value="2.81 A"/>
    <property type="chains" value="A/B/C/D=11-388"/>
</dbReference>
<dbReference type="PDB" id="3V3N">
    <property type="method" value="X-ray"/>
    <property type="resolution" value="2.70 A"/>
    <property type="chains" value="A/B/C/D=11-388"/>
</dbReference>
<dbReference type="PDB" id="3V3O">
    <property type="method" value="X-ray"/>
    <property type="resolution" value="2.90 A"/>
    <property type="chains" value="A/B/C/D=11-388"/>
</dbReference>
<dbReference type="PDB" id="4A6N">
    <property type="method" value="X-ray"/>
    <property type="resolution" value="2.30 A"/>
    <property type="chains" value="A/B/C/D=11-388"/>
</dbReference>
<dbReference type="PDB" id="4A99">
    <property type="method" value="X-ray"/>
    <property type="resolution" value="2.18 A"/>
    <property type="chains" value="A/B/C/D=11-388"/>
</dbReference>
<dbReference type="PDB" id="4GUV">
    <property type="method" value="X-ray"/>
    <property type="resolution" value="2.73 A"/>
    <property type="chains" value="A/B/C/D=11-388"/>
</dbReference>
<dbReference type="PDBsum" id="2XDO"/>
<dbReference type="PDBsum" id="2XYO"/>
<dbReference type="PDBsum" id="2Y6Q"/>
<dbReference type="PDBsum" id="2Y6R"/>
<dbReference type="PDBsum" id="3P9U"/>
<dbReference type="PDBsum" id="3V3N"/>
<dbReference type="PDBsum" id="3V3O"/>
<dbReference type="PDBsum" id="4A6N"/>
<dbReference type="PDBsum" id="4A99"/>
<dbReference type="PDBsum" id="4GUV"/>
<dbReference type="SMR" id="Q93L51"/>
<dbReference type="DrugBank" id="DB13092">
    <property type="generic name" value="Meclocycline"/>
</dbReference>
<dbReference type="BRENDA" id="1.14.13.231">
    <property type="organism ID" value="709"/>
</dbReference>
<dbReference type="EvolutionaryTrace" id="Q93L51"/>
<dbReference type="GO" id="GO:0005737">
    <property type="term" value="C:cytoplasm"/>
    <property type="evidence" value="ECO:0007669"/>
    <property type="project" value="UniProtKB-SubCell"/>
</dbReference>
<dbReference type="GO" id="GO:0071949">
    <property type="term" value="F:FAD binding"/>
    <property type="evidence" value="ECO:0007669"/>
    <property type="project" value="InterPro"/>
</dbReference>
<dbReference type="GO" id="GO:0004497">
    <property type="term" value="F:monooxygenase activity"/>
    <property type="evidence" value="ECO:0007669"/>
    <property type="project" value="UniProtKB-UniRule"/>
</dbReference>
<dbReference type="GO" id="GO:0046677">
    <property type="term" value="P:response to antibiotic"/>
    <property type="evidence" value="ECO:0007669"/>
    <property type="project" value="UniProtKB-KW"/>
</dbReference>
<dbReference type="Gene3D" id="3.50.50.60">
    <property type="entry name" value="FAD/NAD(P)-binding domain"/>
    <property type="match status" value="1"/>
</dbReference>
<dbReference type="HAMAP" id="MF_00845">
    <property type="entry name" value="TetX_monooxygenase"/>
    <property type="match status" value="1"/>
</dbReference>
<dbReference type="InterPro" id="IPR002938">
    <property type="entry name" value="FAD-bd"/>
</dbReference>
<dbReference type="InterPro" id="IPR036188">
    <property type="entry name" value="FAD/NAD-bd_sf"/>
</dbReference>
<dbReference type="InterPro" id="IPR043683">
    <property type="entry name" value="TetX_monooxygenase"/>
</dbReference>
<dbReference type="NCBIfam" id="NF033111">
    <property type="entry name" value="tet_monoox_X"/>
    <property type="match status" value="1"/>
</dbReference>
<dbReference type="PANTHER" id="PTHR46972:SF1">
    <property type="entry name" value="FAD DEPENDENT OXIDOREDUCTASE DOMAIN-CONTAINING PROTEIN"/>
    <property type="match status" value="1"/>
</dbReference>
<dbReference type="PANTHER" id="PTHR46972">
    <property type="entry name" value="MONOOXYGENASE ASQM-RELATED"/>
    <property type="match status" value="1"/>
</dbReference>
<dbReference type="Pfam" id="PF01494">
    <property type="entry name" value="FAD_binding_3"/>
    <property type="match status" value="1"/>
</dbReference>
<dbReference type="PRINTS" id="PR00420">
    <property type="entry name" value="RNGMNOXGNASE"/>
</dbReference>
<dbReference type="SUPFAM" id="SSF51905">
    <property type="entry name" value="FAD/NAD(P)-binding domain"/>
    <property type="match status" value="1"/>
</dbReference>
<organism>
    <name type="scientific">Bacteroides thetaiotaomicron</name>
    <dbReference type="NCBI Taxonomy" id="818"/>
    <lineage>
        <taxon>Bacteria</taxon>
        <taxon>Pseudomonadati</taxon>
        <taxon>Bacteroidota</taxon>
        <taxon>Bacteroidia</taxon>
        <taxon>Bacteroidales</taxon>
        <taxon>Bacteroidaceae</taxon>
        <taxon>Bacteroides</taxon>
    </lineage>
</organism>
<keyword id="KW-0002">3D-structure</keyword>
<keyword id="KW-0046">Antibiotic resistance</keyword>
<keyword id="KW-0963">Cytoplasm</keyword>
<keyword id="KW-0274">FAD</keyword>
<keyword id="KW-0285">Flavoprotein</keyword>
<keyword id="KW-0503">Monooxygenase</keyword>
<keyword id="KW-0521">NADP</keyword>
<keyword id="KW-0547">Nucleotide-binding</keyword>
<keyword id="KW-0560">Oxidoreductase</keyword>
<keyword id="KW-0814">Transposable element</keyword>
<accession>Q93L51</accession>
<sequence>MTMRIDTDKQMNLLSDKNVAIIGGGPVGLTMAKLLQQNGIDVSVYERDNDREARIFGGTLDLHKGSGQEAMKKAGLLQTYYDLALPMGVNIADEKGNILSTKNVKPENRFDNPEINRNDLRAILLNSLENDTVIWDRKLVMLEPGKKKWTLTFENKPSETADLVILANGGMSKVRKFVTDTEVEETGTFNIQADIHQPEINCPGFFQLCNGNRLMASHQGNLLFANPNNNGALHFGISFKTPDEWKNQTQVDFQNRNSVVDFLLKEFSDWDERYKELIHTTLSFVGLATRIFPLEKPWKSKRPLPITMIGDAAHLMPPFAGQGVNSGLVDALILSDNLADGKFNSIEEAVKNYEQQMFIYGKEAQEESTQNEIEMFKPDFTFQQLLNV</sequence>
<gene>
    <name evidence="12" type="primary">tetX2</name>
</gene>
<proteinExistence type="evidence at protein level"/>
<comment type="function">
    <text evidence="1 3 4 7 9 10">An FAD-requiring monooxygenase active on tetracycline antibiotic derivatives, which leads to their inactivation (PubMed:15452119, PubMed:16128584). Hydroxylates carbon 11a of oxytetracycline and tigecycline (PubMed:15452119, PubMed:26097034). Acts on many tetracycline analogs (chlorotetracycline, demeclocycline, doxycycline, minocycline, oxytetracyclinee), probably by monooxygenization (PubMed:15452119, PubMed:16128584). Tigecycline, a new generation tetracycline antibiotic, is rendered less effective against E.coli by this monooxygenation, is much weaker at inhibiting translation in vitro and binds Mg(2+) considerably less well (PubMed:16128584, PubMed:26097034). Expression in E.coli BW25113 reduces its growth rate about 5%. The reaction probably proceeds by FAD reduction by NADPH and, second, hydroxylation of antibiotic in a ping-pong mechanism (PubMed:23236139). Degrades chlortetracycline, probably by monooxygenation (PubMed:15452119, PubMed:28481346). Slowly oxidizes anhydrotetracycline, the final substrate in tetracycline biosynthesis (PubMed:26097034).</text>
</comment>
<comment type="catalytic activity">
    <reaction evidence="1 3 4 7 9 10">
        <text>a tetracycline + NADPH + O2 + H(+) = an 11a-hydroxytetracycline + NADP(+) + H2O</text>
        <dbReference type="Rhea" id="RHEA:61444"/>
        <dbReference type="ChEBI" id="CHEBI:15377"/>
        <dbReference type="ChEBI" id="CHEBI:15378"/>
        <dbReference type="ChEBI" id="CHEBI:15379"/>
        <dbReference type="ChEBI" id="CHEBI:57783"/>
        <dbReference type="ChEBI" id="CHEBI:58349"/>
        <dbReference type="ChEBI" id="CHEBI:144644"/>
        <dbReference type="ChEBI" id="CHEBI:144645"/>
    </reaction>
</comment>
<comment type="catalytic activity">
    <reaction evidence="16 19">
        <text>tetracycline + NADPH + O2 + H(+) = 11a-hydroxytetracycline + NADP(+) + H2O</text>
        <dbReference type="Rhea" id="RHEA:50004"/>
        <dbReference type="ChEBI" id="CHEBI:15377"/>
        <dbReference type="ChEBI" id="CHEBI:15378"/>
        <dbReference type="ChEBI" id="CHEBI:15379"/>
        <dbReference type="ChEBI" id="CHEBI:57783"/>
        <dbReference type="ChEBI" id="CHEBI:58349"/>
        <dbReference type="ChEBI" id="CHEBI:77932"/>
        <dbReference type="ChEBI" id="CHEBI:132727"/>
        <dbReference type="EC" id="1.14.13.231"/>
    </reaction>
</comment>
<comment type="catalytic activity">
    <reaction evidence="4">
        <text>tigecycline + NADPH + O2 + H(+) = 11a-hydroxytigecycline + NADP(+) + H2O</text>
        <dbReference type="Rhea" id="RHEA:61448"/>
        <dbReference type="ChEBI" id="CHEBI:15377"/>
        <dbReference type="ChEBI" id="CHEBI:15378"/>
        <dbReference type="ChEBI" id="CHEBI:15379"/>
        <dbReference type="ChEBI" id="CHEBI:57783"/>
        <dbReference type="ChEBI" id="CHEBI:58349"/>
        <dbReference type="ChEBI" id="CHEBI:142708"/>
        <dbReference type="ChEBI" id="CHEBI:142709"/>
    </reaction>
</comment>
<comment type="catalytic activity">
    <reaction evidence="3">
        <text>oxytetracycline + NADPH + O2 + H(+) = 11a-hydroxy-oxytetracycline + NADP(+) + H2O</text>
        <dbReference type="Rhea" id="RHEA:61452"/>
        <dbReference type="ChEBI" id="CHEBI:15377"/>
        <dbReference type="ChEBI" id="CHEBI:15378"/>
        <dbReference type="ChEBI" id="CHEBI:15379"/>
        <dbReference type="ChEBI" id="CHEBI:57783"/>
        <dbReference type="ChEBI" id="CHEBI:58349"/>
        <dbReference type="ChEBI" id="CHEBI:133011"/>
        <dbReference type="ChEBI" id="CHEBI:144646"/>
    </reaction>
</comment>
<comment type="cofactor">
    <cofactor evidence="1 3 5 6 7 8 11">
        <name>FAD</name>
        <dbReference type="ChEBI" id="CHEBI:57692"/>
    </cofactor>
    <text evidence="5 6 7 8 11">Binds 1 FAD per subunit, which helps bind the antibiotic substrate.</text>
</comment>
<comment type="activity regulation">
    <text evidence="10">Anhydrotetracycline, a poor substrate, prevents tetracycline degradation in vitro.</text>
</comment>
<comment type="biophysicochemical properties">
    <kinetics>
        <KM evidence="3">19.9 uM for demeclocycline</KM>
        <KM evidence="3">28.4 uM for minocycline</KM>
        <KM evidence="7">35 uM for minocycline</KM>
        <KM evidence="4">44 uM for tigecycline</KM>
        <KM evidence="3">54 uM for tetracycline</KM>
        <KM evidence="3">76.3 uM for oxytetracycline</KM>
        <KM evidence="3">83.7 uM for doxycycline</KM>
        <KM evidence="3">110 uM for chlortetracycline</KM>
        <KM evidence="3">133 uM for NADPH</KM>
        <KM evidence="7">75 uM for NADPH</KM>
        <text evidence="3">kcat varies from 1.3 sec(-1) for oxytetracycline to 0.12 sec(-1) for minocycline.</text>
    </kinetics>
    <phDependence>
        <text evidence="3">Optimum pH is 8.5.</text>
    </phDependence>
</comment>
<comment type="subunit">
    <text evidence="1 3 5 6 7 8">Monomer.</text>
</comment>
<comment type="subcellular location">
    <subcellularLocation>
        <location evidence="1">Cytoplasm</location>
    </subcellularLocation>
</comment>
<comment type="domain">
    <text evidence="1 5 6 7 8">Consists of an N-terminal FAD-binding domain with a Rossman fold and a C-terminal substrate-binding domain.</text>
</comment>
<comment type="miscellaneous">
    <text evidence="2">Encoded in a conjugative transposon. Immediately upstream of this gene is an N-terminally truncated tetX1 gene that is inactive.</text>
</comment>
<comment type="miscellaneous">
    <text evidence="17">Tetracycline antibiotics bind to the ribosomal acceptor site (A-site), preventing binding of the aminoacyl-tRNA to the A-site. The hydrophilic side of tetracycline makes many hydrogen-bonding interactions with oxygen atoms of the ribosome's phosphate backbone.</text>
</comment>
<comment type="similarity">
    <text evidence="1">Belongs to the aromatic-ring hydroxylase family. TetX subfamily.</text>
</comment>
<name>TETX_BACT4</name>
<evidence type="ECO:0000255" key="1">
    <source>
        <dbReference type="HAMAP-Rule" id="MF_00845"/>
    </source>
</evidence>
<evidence type="ECO:0000269" key="2">
    <source>
    </source>
</evidence>
<evidence type="ECO:0000269" key="3">
    <source>
    </source>
</evidence>
<evidence type="ECO:0000269" key="4">
    <source>
    </source>
</evidence>
<evidence type="ECO:0000269" key="5">
    <source>
    </source>
</evidence>
<evidence type="ECO:0000269" key="6">
    <source>
    </source>
</evidence>
<evidence type="ECO:0000269" key="7">
    <source>
    </source>
</evidence>
<evidence type="ECO:0000269" key="8">
    <source>
    </source>
</evidence>
<evidence type="ECO:0000269" key="9">
    <source>
    </source>
</evidence>
<evidence type="ECO:0000269" key="10">
    <source>
    </source>
</evidence>
<evidence type="ECO:0000269" key="11">
    <source ref="9"/>
</evidence>
<evidence type="ECO:0000303" key="12">
    <source>
    </source>
</evidence>
<evidence type="ECO:0000303" key="13">
    <source>
    </source>
</evidence>
<evidence type="ECO:0000303" key="14">
    <source>
    </source>
</evidence>
<evidence type="ECO:0000303" key="15">
    <source>
    </source>
</evidence>
<evidence type="ECO:0000305" key="16">
    <source>
    </source>
</evidence>
<evidence type="ECO:0000305" key="17">
    <source>
    </source>
</evidence>
<evidence type="ECO:0000305" key="18">
    <source>
    </source>
</evidence>
<evidence type="ECO:0000305" key="19">
    <source>
    </source>
</evidence>
<evidence type="ECO:0007744" key="20">
    <source>
        <dbReference type="PDB" id="2XDO"/>
    </source>
</evidence>
<evidence type="ECO:0007744" key="21">
    <source>
        <dbReference type="PDB" id="2XYO"/>
    </source>
</evidence>
<evidence type="ECO:0007744" key="22">
    <source>
        <dbReference type="PDB" id="2Y6Q"/>
    </source>
</evidence>
<evidence type="ECO:0007744" key="23">
    <source>
        <dbReference type="PDB" id="2Y6R"/>
    </source>
</evidence>
<evidence type="ECO:0007744" key="24">
    <source>
        <dbReference type="PDB" id="3P9U"/>
    </source>
</evidence>
<evidence type="ECO:0007744" key="25">
    <source>
        <dbReference type="PDB" id="3V3N"/>
    </source>
</evidence>
<evidence type="ECO:0007744" key="26">
    <source>
        <dbReference type="PDB" id="3V3O"/>
    </source>
</evidence>
<evidence type="ECO:0007744" key="27">
    <source>
        <dbReference type="PDB" id="4A6N"/>
    </source>
</evidence>
<evidence type="ECO:0007744" key="28">
    <source>
        <dbReference type="PDB" id="4A99"/>
    </source>
</evidence>
<evidence type="ECO:0007744" key="29">
    <source>
        <dbReference type="PDB" id="4GUV"/>
    </source>
</evidence>
<evidence type="ECO:0007829" key="30">
    <source>
        <dbReference type="PDB" id="2XDO"/>
    </source>
</evidence>
<evidence type="ECO:0007829" key="31">
    <source>
        <dbReference type="PDB" id="3P9U"/>
    </source>
</evidence>
<evidence type="ECO:0007829" key="32">
    <source>
        <dbReference type="PDB" id="3V3N"/>
    </source>
</evidence>
<evidence type="ECO:0007829" key="33">
    <source>
        <dbReference type="PDB" id="4A99"/>
    </source>
</evidence>
<feature type="chain" id="PRO_0000448378" description="Flavin-dependent monooxygenase">
    <location>
        <begin position="1"/>
        <end position="388"/>
    </location>
</feature>
<feature type="binding site" evidence="5 6 20 21 22 23 24 25 26 27 28 29">
    <location>
        <begin position="26"/>
        <end position="27"/>
    </location>
    <ligand>
        <name>FAD</name>
        <dbReference type="ChEBI" id="CHEBI:57692"/>
    </ligand>
</feature>
<feature type="binding site" evidence="5 6 20 21 22 23 24 25 26 27 28 29">
    <location>
        <begin position="45"/>
        <end position="48"/>
    </location>
    <ligand>
        <name>FAD</name>
        <dbReference type="ChEBI" id="CHEBI:57692"/>
    </ligand>
</feature>
<feature type="binding site" evidence="1 18">
    <location>
        <position position="54"/>
    </location>
    <ligand>
        <name>NADPH</name>
        <dbReference type="ChEBI" id="CHEBI:57783"/>
    </ligand>
</feature>
<feature type="binding site" evidence="1 26">
    <location>
        <position position="61"/>
    </location>
    <ligand>
        <name>FAD</name>
        <dbReference type="ChEBI" id="CHEBI:57692"/>
    </ligand>
</feature>
<feature type="binding site" evidence="1 5 6 20 21 22 23 24 25 26 27 28 29">
    <location>
        <position position="117"/>
    </location>
    <ligand>
        <name>FAD</name>
        <dbReference type="ChEBI" id="CHEBI:57692"/>
    </ligand>
</feature>
<feature type="binding site" evidence="5 6 20 21 22 23 24 25 26 27 28 29">
    <location>
        <position position="139"/>
    </location>
    <ligand>
        <name>FAD</name>
        <dbReference type="ChEBI" id="CHEBI:57692"/>
    </ligand>
</feature>
<feature type="binding site" evidence="5 8 22 23 25 28">
    <location>
        <position position="192"/>
    </location>
    <ligand>
        <name>substrate</name>
    </ligand>
</feature>
<feature type="binding site" evidence="5 8 22 23 26 27 28">
    <location>
        <position position="213"/>
    </location>
    <ligand>
        <name>substrate</name>
    </ligand>
</feature>
<feature type="binding site" evidence="1 5 6 20 21 22 23 24 25 26 27 28 29">
    <location>
        <position position="311"/>
    </location>
    <ligand>
        <name>FAD</name>
        <dbReference type="ChEBI" id="CHEBI:57692"/>
    </ligand>
</feature>
<feature type="binding site" evidence="5 6 20 21 22 23 24 25 26 27 28 29">
    <location>
        <begin position="321"/>
        <end position="324"/>
    </location>
    <ligand>
        <name>FAD</name>
        <dbReference type="ChEBI" id="CHEBI:57692"/>
    </ligand>
</feature>
<feature type="mutagenesis site" description="E.coli is more resistant to minocycline (MCN), no change in affinity for MCN, decreased affinity for NADPH, decreased growth rate in E.coli." evidence="7">
    <original>K</original>
    <variation>R</variation>
    <location>
        <position position="64"/>
    </location>
</feature>
<feature type="mutagenesis site" description="E.coli is more resistant to MCN, decreased affinity for MCN, slightly decreased affinity for NADPH, increased growth rate in E.coli." evidence="7">
    <original>F</original>
    <variation>Y</variation>
    <location>
        <position position="235"/>
    </location>
</feature>
<feature type="mutagenesis site" description="E.coli is more resistant to MCN, 2-fold increased affinity for MCN, 4-fold increase for NADPH, increased growth rate in E.coli." evidence="7">
    <original>T</original>
    <variation>A</variation>
    <location>
        <position position="280"/>
    </location>
</feature>
<feature type="mutagenesis site" description="E.coli is more resistant to MCN, slightly increased affinity for MCN, decreased affinity for NADPH, decreased growth rate in E.coli." evidence="7">
    <original>T</original>
    <variation>S</variation>
    <location>
        <position position="280"/>
    </location>
</feature>
<feature type="mutagenesis site" description="E.coli is more resistant to MCN, no change in affinity for MCN or NADPH, increased growth rate in E.coli." evidence="7">
    <original>S</original>
    <variation>I</variation>
    <location>
        <position position="326"/>
    </location>
</feature>
<feature type="mutagenesis site" description="E.coli is more resistant to MCN, 2-fold increased affinity for MCN, slightly increased affinity for NADPH, increased growth rate in E.coli." evidence="7">
    <original>N</original>
    <variation>I</variation>
    <location>
        <position position="371"/>
    </location>
</feature>
<feature type="mutagenesis site" description="E.coli is more resistant to MCN, increased affinity for MCN, decreased affinity for NADPH, increased growth rate in E.coli." evidence="7">
    <original>N</original>
    <variation>T</variation>
    <location>
        <position position="371"/>
    </location>
</feature>
<feature type="turn" evidence="33">
    <location>
        <begin position="13"/>
        <end position="16"/>
    </location>
</feature>
<feature type="strand" evidence="30">
    <location>
        <begin position="18"/>
        <end position="22"/>
    </location>
</feature>
<feature type="helix" evidence="30">
    <location>
        <begin position="26"/>
        <end position="36"/>
    </location>
</feature>
<feature type="turn" evidence="30">
    <location>
        <begin position="37"/>
        <end position="39"/>
    </location>
</feature>
<feature type="strand" evidence="30">
    <location>
        <begin position="41"/>
        <end position="46"/>
    </location>
</feature>
<feature type="strand" evidence="30">
    <location>
        <begin position="48"/>
        <end position="50"/>
    </location>
</feature>
<feature type="strand" evidence="32">
    <location>
        <begin position="59"/>
        <end position="61"/>
    </location>
</feature>
<feature type="turn" evidence="30">
    <location>
        <begin position="64"/>
        <end position="66"/>
    </location>
</feature>
<feature type="helix" evidence="30">
    <location>
        <begin position="67"/>
        <end position="73"/>
    </location>
</feature>
<feature type="helix" evidence="30">
    <location>
        <begin position="77"/>
        <end position="83"/>
    </location>
</feature>
<feature type="strand" evidence="30">
    <location>
        <begin position="89"/>
        <end position="92"/>
    </location>
</feature>
<feature type="strand" evidence="30">
    <location>
        <begin position="94"/>
        <end position="101"/>
    </location>
</feature>
<feature type="helix" evidence="30">
    <location>
        <begin position="105"/>
        <end position="107"/>
    </location>
</feature>
<feature type="helix" evidence="32">
    <location>
        <begin position="108"/>
        <end position="110"/>
    </location>
</feature>
<feature type="strand" evidence="32">
    <location>
        <begin position="114"/>
        <end position="116"/>
    </location>
</feature>
<feature type="helix" evidence="30">
    <location>
        <begin position="117"/>
        <end position="126"/>
    </location>
</feature>
<feature type="strand" evidence="30">
    <location>
        <begin position="132"/>
        <end position="136"/>
    </location>
</feature>
<feature type="strand" evidence="30">
    <location>
        <begin position="139"/>
        <end position="144"/>
    </location>
</feature>
<feature type="strand" evidence="30">
    <location>
        <begin position="146"/>
        <end position="153"/>
    </location>
</feature>
<feature type="strand" evidence="30">
    <location>
        <begin position="159"/>
        <end position="166"/>
    </location>
</feature>
<feature type="turn" evidence="30">
    <location>
        <begin position="176"/>
        <end position="178"/>
    </location>
</feature>
<feature type="strand" evidence="30">
    <location>
        <begin position="184"/>
        <end position="197"/>
    </location>
</feature>
<feature type="helix" evidence="30">
    <location>
        <begin position="198"/>
        <end position="201"/>
    </location>
</feature>
<feature type="helix" evidence="30">
    <location>
        <begin position="203"/>
        <end position="209"/>
    </location>
</feature>
<feature type="strand" evidence="30">
    <location>
        <begin position="212"/>
        <end position="218"/>
    </location>
</feature>
<feature type="strand" evidence="30">
    <location>
        <begin position="221"/>
        <end position="229"/>
    </location>
</feature>
<feature type="strand" evidence="30">
    <location>
        <begin position="232"/>
        <end position="240"/>
    </location>
</feature>
<feature type="strand" evidence="31">
    <location>
        <begin position="253"/>
        <end position="255"/>
    </location>
</feature>
<feature type="helix" evidence="30">
    <location>
        <begin position="256"/>
        <end position="266"/>
    </location>
</feature>
<feature type="turn" evidence="30">
    <location>
        <begin position="267"/>
        <end position="269"/>
    </location>
</feature>
<feature type="helix" evidence="30">
    <location>
        <begin position="272"/>
        <end position="280"/>
    </location>
</feature>
<feature type="strand" evidence="30">
    <location>
        <begin position="285"/>
        <end position="291"/>
    </location>
</feature>
<feature type="strand" evidence="30">
    <location>
        <begin position="306"/>
        <end position="308"/>
    </location>
</feature>
<feature type="helix" evidence="30">
    <location>
        <begin position="311"/>
        <end position="314"/>
    </location>
</feature>
<feature type="strand" evidence="33">
    <location>
        <begin position="318"/>
        <end position="321"/>
    </location>
</feature>
<feature type="helix" evidence="30">
    <location>
        <begin position="324"/>
        <end position="339"/>
    </location>
</feature>
<feature type="strand" evidence="30">
    <location>
        <begin position="343"/>
        <end position="345"/>
    </location>
</feature>
<feature type="helix" evidence="30">
    <location>
        <begin position="346"/>
        <end position="376"/>
    </location>
</feature>
<feature type="strand" evidence="33">
    <location>
        <begin position="377"/>
        <end position="379"/>
    </location>
</feature>
<reference key="1">
    <citation type="journal article" date="2001" name="Appl. Environ. Microbiol.">
        <title>Characterization of the 13-kilobase ermF region of the Bacteroides conjugative transposon CTnDOT.</title>
        <authorList>
            <person name="Whittle G."/>
            <person name="Hund B.D."/>
            <person name="Shoemaker N.B."/>
            <person name="Salyers A.A."/>
        </authorList>
    </citation>
    <scope>NUCLEOTIDE SEQUENCE [GENOMIC DNA]</scope>
    <source>
        <strain>BT5482A</strain>
        <transposon>CTnDOT</transposon>
    </source>
</reference>
<reference key="2">
    <citation type="journal article" date="2004" name="J. Biol. Chem.">
        <title>TetX is a flavin-dependent monooxygenase conferring resistance to tetracycline antibiotics.</title>
        <authorList>
            <person name="Yang W."/>
            <person name="Moore I.F."/>
            <person name="Koteva K.P."/>
            <person name="Bareich D.C."/>
            <person name="Hughes D.W."/>
            <person name="Wright G.D."/>
        </authorList>
    </citation>
    <scope>FUNCTION IN INACTIVATING OXYTETRACYCLINE</scope>
    <scope>CATALYTIC ACTIVITY</scope>
    <scope>COFACTOR</scope>
    <scope>BIOPHYSICOCHEMICAL PROPERTIES</scope>
    <scope>SUBUNIT</scope>
    <scope>ANTIBIOTIC RESISTANCE</scope>
    <source>
        <strain>BT5482A</strain>
        <transposon>CTnDOT</transposon>
    </source>
</reference>
<reference key="3">
    <citation type="journal article" date="2005" name="Biochemistry">
        <title>Tigecycline is modified by the flavin-dependent monooxygenase TetX.</title>
        <authorList>
            <person name="Moore I.F."/>
            <person name="Hughes D.W."/>
            <person name="Wright G.D."/>
        </authorList>
    </citation>
    <scope>FUNCTION IN INACTIVATING TIGECYCLINE</scope>
    <scope>BIOPHYSICOCHEMICAL PROPERTIES</scope>
    <scope>ANTIBIOTIC RESISTANCE</scope>
    <source>
        <strain>BT5482A</strain>
        <transposon>CTnDOT</transposon>
    </source>
</reference>
<reference key="4">
    <citation type="journal article" date="2015" name="Chem. Biol.">
        <title>The Tetracycline Destructases: A Novel Family of Tetracycline-Inactivating Enzymes.</title>
        <authorList>
            <person name="Forsberg K.J."/>
            <person name="Patel S."/>
            <person name="Wencewicz T.A."/>
            <person name="Dantas G."/>
        </authorList>
    </citation>
    <scope>FUNCTION IN INACTIVATING TETRACYCLINE AND ANALOGS</scope>
    <scope>ANTIBIOTIC RESISTANCE</scope>
</reference>
<reference key="5">
    <citation type="journal article" date="2017" name="Nat. Chem. Biol.">
        <title>Plasticity, dynamics, and inhibition of emerging tetracycline resistance enzymes.</title>
        <authorList>
            <person name="Park J."/>
            <person name="Gasparrini A.J."/>
            <person name="Reck M.R."/>
            <person name="Symister C.T."/>
            <person name="Elliott J.L."/>
            <person name="Vogel J.P."/>
            <person name="Wencewicz T.A."/>
            <person name="Dantas G."/>
            <person name="Tolia N.H."/>
        </authorList>
    </citation>
    <scope>FUNCTION IN INACTIVATING CHLORTETRACYCLINE</scope>
    <scope>ACTIVITY REGULATION</scope>
</reference>
<reference evidence="20 21 22 23" key="6">
    <citation type="journal article" date="2011" name="FEBS Lett.">
        <title>Structural basis for a new tetracycline resistance mechanism relying on the TetX monooxygenase.</title>
        <authorList>
            <person name="Volkers G."/>
            <person name="Palm G.J."/>
            <person name="Weiss M.S."/>
            <person name="Wright G.D."/>
            <person name="Hinrichs W."/>
        </authorList>
    </citation>
    <scope>X-RAY CRYSTALLOGRAPHY (2.09 ANGSTROMS) OF 11-388 IN COMPLEX WITH FAD WITH AND WITHOUT ANTIBIOTICS</scope>
    <scope>COFACTOR</scope>
    <scope>SUBUNIT</scope>
    <scope>DOMAIN</scope>
    <source>
        <strain>BT5482A</strain>
        <transposon>CTnDOT</transposon>
    </source>
</reference>
<reference evidence="24" key="7">
    <citation type="journal article" date="2011" name="Proteins">
        <title>Crystal structure of Bacteroides thetaiotaomicron TetX2: a tetracycline degrading monooxygenase at 2.8 A resolution.</title>
        <authorList>
            <person name="Walkiewicz K."/>
            <person name="Davlieva M."/>
            <person name="Wu G."/>
            <person name="Shamoo Y."/>
        </authorList>
    </citation>
    <scope>X-RAY CRYSTALLOGRAPHY (2.81 ANGSTROMS) OF 11-388 IN COMPLEX WITH FAD</scope>
    <scope>COFACTOR</scope>
    <scope>SUBUNIT</scope>
    <scope>DOMAIN</scope>
</reference>
<reference evidence="25" key="8">
    <citation type="journal article" date="2012" name="Proc. Natl. Acad. Sci. U.S.A.">
        <title>Small changes in enzyme function can lead to surprisingly large fitness effects during adaptive evolution of antibiotic resistance.</title>
        <authorList>
            <person name="Walkiewicz K."/>
            <person name="Benitez Cardenas A.S."/>
            <person name="Sun C."/>
            <person name="Bacorn C."/>
            <person name="Saxer G."/>
            <person name="Shamoo Y."/>
        </authorList>
    </citation>
    <scope>X-RAY CRYSTALLOGRAPHY (2.70 ANGSTROMS) OF 11-388 IN COMPLEX WITH FAD AND MINOCYCLINE</scope>
    <scope>FUNCTION</scope>
    <scope>REACTION MECHANISM</scope>
    <scope>COFACTOR</scope>
    <scope>BIOPHYSICOCHEMICAL PROPERTIES</scope>
    <scope>SUBUNIT</scope>
    <scope>DOMAIN</scope>
    <scope>MUTAGENESIS OF LYS-64; PHE-235; THR-280; SER-326 AND ASN-371</scope>
    <scope>EXPRESSION IN E.COLI</scope>
</reference>
<reference evidence="26" key="9">
    <citation type="submission" date="2011-12" db="PDB data bank">
        <title>Crystal structure of TetX2 T280A: an adaptive mutant in complex with tigecycline.</title>
        <authorList>
            <person name="Walkiewicz K."/>
            <person name="Shamoo Y."/>
        </authorList>
    </citation>
    <scope>X-RAY CRYSTALLOGRAPHY (2.90 ANGSTROMS) OF 11-388 IN COMPLEX WITH FAD AND TIGECYCLINE</scope>
    <scope>COFACTOR</scope>
</reference>
<reference evidence="27 28 29" key="10">
    <citation type="journal article" date="2013" name="Acta Crystallogr. D">
        <title>Putative dioxygen-binding sites and recognition of tigecycline and minocycline in the tetracycline-degrading monooxygenase TetX.</title>
        <authorList>
            <person name="Volkers G."/>
            <person name="Damas J.M."/>
            <person name="Palm G.J."/>
            <person name="Panjikar S."/>
            <person name="Soares C.M."/>
            <person name="Hinrichs W."/>
        </authorList>
    </citation>
    <scope>X-RAY CRYSTALLOGRAPHY (2.18 ANGSTROMS) OF 11-388 IN COMPLEX WITH FAD AND WITH ANTIBIOTICS</scope>
    <scope>COFACTOR</scope>
    <scope>SUBUNIT</scope>
</reference>